<feature type="signal peptide" evidence="1">
    <location>
        <begin position="1"/>
        <end position="29"/>
    </location>
</feature>
<feature type="chain" id="PRO_0000014162" description="Uncharacterized protein y4fE">
    <location>
        <begin position="30"/>
        <end position="160"/>
    </location>
</feature>
<geneLocation type="plasmid">
    <name>sym pNGR234a</name>
</geneLocation>
<reference key="1">
    <citation type="journal article" date="1997" name="Nature">
        <title>Molecular basis of symbiosis between Rhizobium and legumes.</title>
        <authorList>
            <person name="Freiberg C.A."/>
            <person name="Fellay R."/>
            <person name="Bairoch A."/>
            <person name="Broughton W.J."/>
            <person name="Rosenthal A."/>
            <person name="Perret X."/>
        </authorList>
    </citation>
    <scope>NUCLEOTIDE SEQUENCE [LARGE SCALE GENOMIC DNA]</scope>
    <source>
        <strain>NBRC 101917 / NGR234</strain>
    </source>
</reference>
<reference key="2">
    <citation type="journal article" date="2009" name="Appl. Environ. Microbiol.">
        <title>Rhizobium sp. strain NGR234 possesses a remarkable number of secretion systems.</title>
        <authorList>
            <person name="Schmeisser C."/>
            <person name="Liesegang H."/>
            <person name="Krysciak D."/>
            <person name="Bakkou N."/>
            <person name="Le Quere A."/>
            <person name="Wollherr A."/>
            <person name="Heinemeyer I."/>
            <person name="Morgenstern B."/>
            <person name="Pommerening-Roeser A."/>
            <person name="Flores M."/>
            <person name="Palacios R."/>
            <person name="Brenner S."/>
            <person name="Gottschalk G."/>
            <person name="Schmitz R.A."/>
            <person name="Broughton W.J."/>
            <person name="Perret X."/>
            <person name="Strittmatter A.W."/>
            <person name="Streit W.R."/>
        </authorList>
    </citation>
    <scope>NUCLEOTIDE SEQUENCE [LARGE SCALE GENOMIC DNA]</scope>
    <source>
        <strain>NBRC 101917 / NGR234</strain>
    </source>
</reference>
<proteinExistence type="inferred from homology"/>
<name>Y4FE_SINFN</name>
<sequence>MCGLGIVPMVKPALFGMLILVIGTSTVQAEECWSLLNTPDWSKIKAAIEQIKVCEALPEGPNRTRRFEATQIDICSAPEGFRVRSKVEVTCATSDAAFIRFSVKGAVTPDVTVDVGACRITSLDLDVSGDVGEYLSGLGLLQPVLRGWAQEQLNRICGKA</sequence>
<organism>
    <name type="scientific">Sinorhizobium fredii (strain NBRC 101917 / NGR234)</name>
    <dbReference type="NCBI Taxonomy" id="394"/>
    <lineage>
        <taxon>Bacteria</taxon>
        <taxon>Pseudomonadati</taxon>
        <taxon>Pseudomonadota</taxon>
        <taxon>Alphaproteobacteria</taxon>
        <taxon>Hyphomicrobiales</taxon>
        <taxon>Rhizobiaceae</taxon>
        <taxon>Sinorhizobium/Ensifer group</taxon>
        <taxon>Sinorhizobium</taxon>
    </lineage>
</organism>
<protein>
    <recommendedName>
        <fullName>Uncharacterized protein y4fE</fullName>
    </recommendedName>
</protein>
<gene>
    <name type="ordered locus">NGR_a03760</name>
    <name type="ORF">y4fE</name>
</gene>
<dbReference type="EMBL" id="U00090">
    <property type="protein sequence ID" value="AAB91662.1"/>
    <property type="molecule type" value="Genomic_DNA"/>
</dbReference>
<dbReference type="RefSeq" id="NP_443850.1">
    <property type="nucleotide sequence ID" value="NC_000914.2"/>
</dbReference>
<dbReference type="KEGG" id="rhi:NGR_a03760"/>
<dbReference type="PATRIC" id="fig|394.7.peg.383"/>
<dbReference type="eggNOG" id="ENOG50319VT">
    <property type="taxonomic scope" value="Bacteria"/>
</dbReference>
<dbReference type="HOGENOM" id="CLU_139782_0_0_5"/>
<dbReference type="OrthoDB" id="8373285at2"/>
<dbReference type="Proteomes" id="UP000001054">
    <property type="component" value="Plasmid pNGR234a"/>
</dbReference>
<accession>P55443</accession>
<evidence type="ECO:0000255" key="1"/>
<keyword id="KW-0614">Plasmid</keyword>
<keyword id="KW-1185">Reference proteome</keyword>
<keyword id="KW-0732">Signal</keyword>